<dbReference type="EC" id="3.4.24.-"/>
<dbReference type="EMBL" id="HM627204">
    <property type="protein sequence ID" value="AEH95531.1"/>
    <property type="molecule type" value="mRNA"/>
</dbReference>
<dbReference type="SMR" id="F8RKW1"/>
<dbReference type="MEROPS" id="M12.159"/>
<dbReference type="GO" id="GO:0005576">
    <property type="term" value="C:extracellular region"/>
    <property type="evidence" value="ECO:0007669"/>
    <property type="project" value="UniProtKB-SubCell"/>
</dbReference>
<dbReference type="GO" id="GO:0005886">
    <property type="term" value="C:plasma membrane"/>
    <property type="evidence" value="ECO:0007669"/>
    <property type="project" value="TreeGrafter"/>
</dbReference>
<dbReference type="GO" id="GO:0046872">
    <property type="term" value="F:metal ion binding"/>
    <property type="evidence" value="ECO:0007669"/>
    <property type="project" value="UniProtKB-KW"/>
</dbReference>
<dbReference type="GO" id="GO:0004222">
    <property type="term" value="F:metalloendopeptidase activity"/>
    <property type="evidence" value="ECO:0007669"/>
    <property type="project" value="InterPro"/>
</dbReference>
<dbReference type="GO" id="GO:0090729">
    <property type="term" value="F:toxin activity"/>
    <property type="evidence" value="ECO:0007669"/>
    <property type="project" value="UniProtKB-KW"/>
</dbReference>
<dbReference type="GO" id="GO:0006508">
    <property type="term" value="P:proteolysis"/>
    <property type="evidence" value="ECO:0007669"/>
    <property type="project" value="UniProtKB-KW"/>
</dbReference>
<dbReference type="CDD" id="cd04269">
    <property type="entry name" value="ZnMc_adamalysin_II_like"/>
    <property type="match status" value="1"/>
</dbReference>
<dbReference type="FunFam" id="3.40.390.10:FF:000002">
    <property type="entry name" value="Disintegrin and metalloproteinase domain-containing protein 22"/>
    <property type="match status" value="1"/>
</dbReference>
<dbReference type="FunFam" id="4.10.70.10:FF:000001">
    <property type="entry name" value="Disintegrin and metalloproteinase domain-containing protein 22"/>
    <property type="match status" value="1"/>
</dbReference>
<dbReference type="Gene3D" id="3.40.390.10">
    <property type="entry name" value="Collagenase (Catalytic Domain)"/>
    <property type="match status" value="1"/>
</dbReference>
<dbReference type="Gene3D" id="4.10.70.10">
    <property type="entry name" value="Disintegrin domain"/>
    <property type="match status" value="1"/>
</dbReference>
<dbReference type="InterPro" id="IPR006586">
    <property type="entry name" value="ADAM_Cys-rich"/>
</dbReference>
<dbReference type="InterPro" id="IPR018358">
    <property type="entry name" value="Disintegrin_CS"/>
</dbReference>
<dbReference type="InterPro" id="IPR001762">
    <property type="entry name" value="Disintegrin_dom"/>
</dbReference>
<dbReference type="InterPro" id="IPR036436">
    <property type="entry name" value="Disintegrin_dom_sf"/>
</dbReference>
<dbReference type="InterPro" id="IPR024079">
    <property type="entry name" value="MetalloPept_cat_dom_sf"/>
</dbReference>
<dbReference type="InterPro" id="IPR001590">
    <property type="entry name" value="Peptidase_M12B"/>
</dbReference>
<dbReference type="InterPro" id="IPR002870">
    <property type="entry name" value="Peptidase_M12B_N"/>
</dbReference>
<dbReference type="InterPro" id="IPR034027">
    <property type="entry name" value="Reprolysin_adamalysin"/>
</dbReference>
<dbReference type="PANTHER" id="PTHR11905">
    <property type="entry name" value="ADAM A DISINTEGRIN AND METALLOPROTEASE DOMAIN"/>
    <property type="match status" value="1"/>
</dbReference>
<dbReference type="PANTHER" id="PTHR11905:SF32">
    <property type="entry name" value="DISINTEGRIN AND METALLOPROTEINASE DOMAIN-CONTAINING PROTEIN 28"/>
    <property type="match status" value="1"/>
</dbReference>
<dbReference type="Pfam" id="PF08516">
    <property type="entry name" value="ADAM_CR"/>
    <property type="match status" value="1"/>
</dbReference>
<dbReference type="Pfam" id="PF00200">
    <property type="entry name" value="Disintegrin"/>
    <property type="match status" value="1"/>
</dbReference>
<dbReference type="Pfam" id="PF01562">
    <property type="entry name" value="Pep_M12B_propep"/>
    <property type="match status" value="1"/>
</dbReference>
<dbReference type="Pfam" id="PF01421">
    <property type="entry name" value="Reprolysin"/>
    <property type="match status" value="1"/>
</dbReference>
<dbReference type="PRINTS" id="PR00289">
    <property type="entry name" value="DISINTEGRIN"/>
</dbReference>
<dbReference type="SMART" id="SM00608">
    <property type="entry name" value="ACR"/>
    <property type="match status" value="1"/>
</dbReference>
<dbReference type="SMART" id="SM00050">
    <property type="entry name" value="DISIN"/>
    <property type="match status" value="1"/>
</dbReference>
<dbReference type="SUPFAM" id="SSF57552">
    <property type="entry name" value="Blood coagulation inhibitor (disintegrin)"/>
    <property type="match status" value="1"/>
</dbReference>
<dbReference type="SUPFAM" id="SSF55486">
    <property type="entry name" value="Metalloproteases ('zincins'), catalytic domain"/>
    <property type="match status" value="1"/>
</dbReference>
<dbReference type="PROSITE" id="PS50215">
    <property type="entry name" value="ADAM_MEPRO"/>
    <property type="match status" value="1"/>
</dbReference>
<dbReference type="PROSITE" id="PS00427">
    <property type="entry name" value="DISINTEGRIN_1"/>
    <property type="match status" value="1"/>
</dbReference>
<dbReference type="PROSITE" id="PS50214">
    <property type="entry name" value="DISINTEGRIN_2"/>
    <property type="match status" value="1"/>
</dbReference>
<dbReference type="PROSITE" id="PS00142">
    <property type="entry name" value="ZINC_PROTEASE"/>
    <property type="match status" value="1"/>
</dbReference>
<keyword id="KW-0106">Calcium</keyword>
<keyword id="KW-1015">Disulfide bond</keyword>
<keyword id="KW-0325">Glycoprotein</keyword>
<keyword id="KW-1199">Hemostasis impairing toxin</keyword>
<keyword id="KW-0378">Hydrolase</keyword>
<keyword id="KW-0479">Metal-binding</keyword>
<keyword id="KW-0482">Metalloprotease</keyword>
<keyword id="KW-0645">Protease</keyword>
<keyword id="KW-0964">Secreted</keyword>
<keyword id="KW-0732">Signal</keyword>
<keyword id="KW-0800">Toxin</keyword>
<keyword id="KW-0862">Zinc</keyword>
<keyword id="KW-0865">Zymogen</keyword>
<accession>F8RKW1</accession>
<feature type="signal peptide" evidence="2">
    <location>
        <begin position="1"/>
        <end position="20"/>
    </location>
</feature>
<feature type="propeptide" id="PRO_0000425506" evidence="2">
    <location>
        <begin position="21"/>
        <end position="191"/>
    </location>
</feature>
<feature type="chain" id="PRO_0000425507" description="Zinc metalloproteinase-disintegrin-like MTP4">
    <location>
        <begin position="192"/>
        <end position="613"/>
    </location>
</feature>
<feature type="domain" description="Peptidase M12B" evidence="4">
    <location>
        <begin position="205"/>
        <end position="401"/>
    </location>
</feature>
<feature type="domain" description="Disintegrin" evidence="3">
    <location>
        <begin position="409"/>
        <end position="495"/>
    </location>
</feature>
<feature type="region of interest" description="Hypervariable region that may play important roles toward cell migration" evidence="1">
    <location>
        <begin position="561"/>
        <end position="574"/>
    </location>
</feature>
<feature type="short sequence motif" description="D/ECD-tripeptide">
    <location>
        <begin position="473"/>
        <end position="475"/>
    </location>
</feature>
<feature type="binding site" evidence="1">
    <location>
        <position position="208"/>
    </location>
    <ligand>
        <name>Ca(2+)</name>
        <dbReference type="ChEBI" id="CHEBI:29108"/>
        <label>1</label>
    </ligand>
</feature>
<feature type="binding site" evidence="1">
    <location>
        <position position="292"/>
    </location>
    <ligand>
        <name>Ca(2+)</name>
        <dbReference type="ChEBI" id="CHEBI:29108"/>
        <label>1</label>
    </ligand>
</feature>
<feature type="binding site" evidence="1">
    <location>
        <position position="341"/>
    </location>
    <ligand>
        <name>Zn(2+)</name>
        <dbReference type="ChEBI" id="CHEBI:29105"/>
        <note>catalytic</note>
    </ligand>
</feature>
<feature type="binding site" evidence="1">
    <location>
        <position position="345"/>
    </location>
    <ligand>
        <name>Zn(2+)</name>
        <dbReference type="ChEBI" id="CHEBI:29105"/>
        <note>catalytic</note>
    </ligand>
</feature>
<feature type="binding site" evidence="1">
    <location>
        <position position="351"/>
    </location>
    <ligand>
        <name>Zn(2+)</name>
        <dbReference type="ChEBI" id="CHEBI:29105"/>
        <note>catalytic</note>
    </ligand>
</feature>
<feature type="binding site" evidence="1">
    <location>
        <position position="396"/>
    </location>
    <ligand>
        <name>Ca(2+)</name>
        <dbReference type="ChEBI" id="CHEBI:29108"/>
        <label>1</label>
    </ligand>
</feature>
<feature type="binding site" evidence="1">
    <location>
        <position position="399"/>
    </location>
    <ligand>
        <name>Ca(2+)</name>
        <dbReference type="ChEBI" id="CHEBI:29108"/>
        <label>1</label>
    </ligand>
</feature>
<feature type="binding site" evidence="1">
    <location>
        <position position="414"/>
    </location>
    <ligand>
        <name>Ca(2+)</name>
        <dbReference type="ChEBI" id="CHEBI:29108"/>
        <label>2</label>
    </ligand>
</feature>
<feature type="binding site" evidence="1">
    <location>
        <position position="416"/>
    </location>
    <ligand>
        <name>Ca(2+)</name>
        <dbReference type="ChEBI" id="CHEBI:29108"/>
        <label>2</label>
    </ligand>
</feature>
<feature type="binding site" evidence="1">
    <location>
        <position position="418"/>
    </location>
    <ligand>
        <name>Ca(2+)</name>
        <dbReference type="ChEBI" id="CHEBI:29108"/>
        <label>2</label>
    </ligand>
</feature>
<feature type="binding site" evidence="1">
    <location>
        <position position="421"/>
    </location>
    <ligand>
        <name>Ca(2+)</name>
        <dbReference type="ChEBI" id="CHEBI:29108"/>
        <label>2</label>
    </ligand>
</feature>
<feature type="binding site" evidence="1">
    <location>
        <position position="424"/>
    </location>
    <ligand>
        <name>Ca(2+)</name>
        <dbReference type="ChEBI" id="CHEBI:29108"/>
        <label>2</label>
    </ligand>
</feature>
<feature type="binding site" evidence="1">
    <location>
        <position position="475"/>
    </location>
    <ligand>
        <name>Ca(2+)</name>
        <dbReference type="ChEBI" id="CHEBI:29108"/>
        <label>3</label>
    </ligand>
</feature>
<feature type="binding site" evidence="1">
    <location>
        <position position="476"/>
    </location>
    <ligand>
        <name>Ca(2+)</name>
        <dbReference type="ChEBI" id="CHEBI:29108"/>
        <label>3</label>
    </ligand>
</feature>
<feature type="binding site" evidence="1">
    <location>
        <position position="478"/>
    </location>
    <ligand>
        <name>Ca(2+)</name>
        <dbReference type="ChEBI" id="CHEBI:29108"/>
        <label>3</label>
    </ligand>
</feature>
<feature type="binding site" evidence="1">
    <location>
        <position position="490"/>
    </location>
    <ligand>
        <name>Ca(2+)</name>
        <dbReference type="ChEBI" id="CHEBI:29108"/>
        <label>3</label>
    </ligand>
</feature>
<feature type="glycosylation site" description="N-linked (GlcNAc...) asparagine" evidence="2">
    <location>
        <position position="282"/>
    </location>
</feature>
<feature type="glycosylation site" description="N-linked (GlcNAc...) asparagine" evidence="2">
    <location>
        <position position="437"/>
    </location>
</feature>
<feature type="glycosylation site" description="N-linked (GlcNAc...) asparagine" evidence="2">
    <location>
        <position position="572"/>
    </location>
</feature>
<feature type="disulfide bond" evidence="1">
    <location>
        <begin position="316"/>
        <end position="396"/>
    </location>
</feature>
<feature type="disulfide bond" evidence="1">
    <location>
        <begin position="356"/>
        <end position="380"/>
    </location>
</feature>
<feature type="disulfide bond" evidence="1">
    <location>
        <begin position="358"/>
        <end position="363"/>
    </location>
</feature>
<feature type="disulfide bond" evidence="1">
    <location>
        <begin position="412"/>
        <end position="441"/>
    </location>
</feature>
<feature type="disulfide bond" evidence="1">
    <location>
        <begin position="423"/>
        <end position="436"/>
    </location>
</feature>
<feature type="disulfide bond" evidence="1">
    <location>
        <begin position="425"/>
        <end position="431"/>
    </location>
</feature>
<feature type="disulfide bond" evidence="1">
    <location>
        <begin position="435"/>
        <end position="458"/>
    </location>
</feature>
<feature type="disulfide bond" evidence="1">
    <location>
        <begin position="449"/>
        <end position="455"/>
    </location>
</feature>
<feature type="disulfide bond" evidence="1">
    <location>
        <begin position="454"/>
        <end position="480"/>
    </location>
</feature>
<feature type="disulfide bond" evidence="1">
    <location>
        <begin position="467"/>
        <end position="487"/>
    </location>
</feature>
<feature type="disulfide bond" evidence="1">
    <location>
        <begin position="474"/>
        <end position="506"/>
    </location>
</feature>
<feature type="disulfide bond" evidence="1">
    <location>
        <begin position="499"/>
        <end position="511"/>
    </location>
</feature>
<feature type="disulfide bond" evidence="1">
    <location>
        <begin position="518"/>
        <end position="568"/>
    </location>
</feature>
<feature type="disulfide bond" evidence="1">
    <location>
        <begin position="533"/>
        <end position="575"/>
    </location>
</feature>
<feature type="disulfide bond" evidence="1">
    <location>
        <begin position="543"/>
        <end position="577"/>
    </location>
</feature>
<feature type="disulfide bond" evidence="1">
    <location>
        <begin position="546"/>
        <end position="556"/>
    </location>
</feature>
<feature type="disulfide bond" evidence="1">
    <location>
        <begin position="563"/>
        <end position="601"/>
    </location>
</feature>
<feature type="disulfide bond" evidence="1">
    <location>
        <begin position="595"/>
        <end position="606"/>
    </location>
</feature>
<comment type="function">
    <text>Snake venom zinc metalloproteinase that may impair hemostasis in the prey.</text>
</comment>
<comment type="cofactor">
    <cofactor evidence="1">
        <name>Zn(2+)</name>
        <dbReference type="ChEBI" id="CHEBI:29105"/>
    </cofactor>
    <text evidence="1">Binds 1 zinc ion per subunit.</text>
</comment>
<comment type="subunit">
    <text evidence="1">Monomer.</text>
</comment>
<comment type="subcellular location">
    <subcellularLocation>
        <location>Secreted</location>
    </subcellularLocation>
</comment>
<comment type="tissue specificity">
    <text>Expressed by the venom gland.</text>
</comment>
<comment type="similarity">
    <text evidence="5">Belongs to the venom metalloproteinase (M12B) family. P-III subfamily.</text>
</comment>
<evidence type="ECO:0000250" key="1"/>
<evidence type="ECO:0000255" key="2"/>
<evidence type="ECO:0000255" key="3">
    <source>
        <dbReference type="PROSITE-ProRule" id="PRU00068"/>
    </source>
</evidence>
<evidence type="ECO:0000255" key="4">
    <source>
        <dbReference type="PROSITE-ProRule" id="PRU00276"/>
    </source>
</evidence>
<evidence type="ECO:0000305" key="5"/>
<reference key="1">
    <citation type="journal article" date="2011" name="J. Proteome Res.">
        <title>Identification of novel proteins from the venom of a cryptic snake Drysdalia coronoides by a combined transcriptomics and proteomics approach.</title>
        <authorList>
            <person name="Chatrath S.T."/>
            <person name="Chapeaurouge A."/>
            <person name="Lin Q."/>
            <person name="Lim T.K."/>
            <person name="Dunstan N."/>
            <person name="Mirtschin P."/>
            <person name="Kumar P.P."/>
            <person name="Kini R.M."/>
        </authorList>
    </citation>
    <scope>NUCLEOTIDE SEQUENCE [MRNA]</scope>
    <scope>IDENTIFICATION BY MASS SPECTROMETRY</scope>
    <source>
        <tissue>Venom</tissue>
        <tissue>Venom gland</tissue>
    </source>
</reference>
<reference key="2">
    <citation type="journal article" date="2013" name="Proc. Natl. Acad. Sci. U.S.A.">
        <title>The king cobra genome reveals dynamic gene evolution and adaptation in the snake venom system.</title>
        <authorList>
            <person name="Vonk F.J."/>
            <person name="Casewell N.R."/>
            <person name="Henkel C.V."/>
            <person name="Heimberg A.M."/>
            <person name="Jansen H.J."/>
            <person name="McCleary R.J."/>
            <person name="Kerkkamp H.M."/>
            <person name="Vos R.A."/>
            <person name="Guerreiro I."/>
            <person name="Calvete J.J."/>
            <person name="Wuster W."/>
            <person name="Woods A.E."/>
            <person name="Logan J.M."/>
            <person name="Harrison R.A."/>
            <person name="Castoe T.A."/>
            <person name="de Koning A.P."/>
            <person name="Pollock D.D."/>
            <person name="Yandell M."/>
            <person name="Calderon D."/>
            <person name="Renjifo C."/>
            <person name="Currier R.B."/>
            <person name="Salgado D."/>
            <person name="Pla D."/>
            <person name="Sanz L."/>
            <person name="Hyder A.S."/>
            <person name="Ribeiro J.M."/>
            <person name="Arntzen J.W."/>
            <person name="van den Thillart G.E."/>
            <person name="Boetzer M."/>
            <person name="Pirovano W."/>
            <person name="Dirks R.P."/>
            <person name="Spaink H.P."/>
            <person name="Duboule D."/>
            <person name="McGlinn E."/>
            <person name="Kini R.M."/>
            <person name="Richardson M.K."/>
        </authorList>
    </citation>
    <scope>IDENTIFICATION BY MASS SPECTROMETRY</scope>
    <source>
        <tissue>Venom</tissue>
    </source>
</reference>
<proteinExistence type="evidence at protein level"/>
<sequence>MIEVLLVTICFTVFPYQGSSIILESGNVNDYEVVYPQKVPALPKGGVQNPQPETKYEDTMQYEFHVNGEPVVLHLERNKGLFSEDYTETHYAPDGREITTSPPVQDHCYYHGYIQNEADSSAAISACDGLKGHFKHRGETYFIEPLKLSNSESHAIYKDEHVEKEDEIPKICGVTQTTSESDEPIEKISQLTNTPEQDRYLQVKKYIELYVVVDNRMYRNYNSNRDAINERVYEMVNTLNVMYRPLNFFIALIGLEIWSNQDEINIEPEVAVTLRSFGEWRNTTLLPRKRNDNAQLLTGIDFNGATVGLAYVGTLCSPTQSVAVIQDHSKRTSMVASTMAHELGHNLGINHDSASCNCNAGPCIMSATISNQPFSKFSSCSVQEHQRYLLRVRPQCILNKPLSTDIVTPPVCGNYFVERGEECDCGSPQDCQSACCNATTCKPQHEAQCDSGECCEKCKFKKAGAECRAAKDDCDLPESCTGQSAKCPTDSFQRNGHPCQNNEGYCYNGKCPIMTNQCIALGGPGVNVSPDECFTLKQNVPECGFCRIENGRKIPCAEKDKMCGKLLCEKGNATCICFPTTHDPDYGMVEPGTKCGDGKVCINRQCVDVQTAY</sequence>
<protein>
    <recommendedName>
        <fullName>Zinc metalloproteinase-disintegrin-like MTP4</fullName>
        <ecNumber>3.4.24.-</ecNumber>
    </recommendedName>
    <alternativeName>
        <fullName>Snake venom metalloproteinase</fullName>
        <shortName>SVMP</shortName>
    </alternativeName>
</protein>
<organism>
    <name type="scientific">Drysdalia coronoides</name>
    <name type="common">White-lipped snake</name>
    <name type="synonym">Hoplocephalus coronoides</name>
    <dbReference type="NCBI Taxonomy" id="66186"/>
    <lineage>
        <taxon>Eukaryota</taxon>
        <taxon>Metazoa</taxon>
        <taxon>Chordata</taxon>
        <taxon>Craniata</taxon>
        <taxon>Vertebrata</taxon>
        <taxon>Euteleostomi</taxon>
        <taxon>Lepidosauria</taxon>
        <taxon>Squamata</taxon>
        <taxon>Bifurcata</taxon>
        <taxon>Unidentata</taxon>
        <taxon>Episquamata</taxon>
        <taxon>Toxicofera</taxon>
        <taxon>Serpentes</taxon>
        <taxon>Colubroidea</taxon>
        <taxon>Elapidae</taxon>
        <taxon>Notechinae</taxon>
        <taxon>Drysdalia</taxon>
    </lineage>
</organism>
<name>VM34_DRYCN</name>